<reference key="1">
    <citation type="journal article" date="2001" name="Science">
        <title>Comparative genomics of Listeria species.</title>
        <authorList>
            <person name="Glaser P."/>
            <person name="Frangeul L."/>
            <person name="Buchrieser C."/>
            <person name="Rusniok C."/>
            <person name="Amend A."/>
            <person name="Baquero F."/>
            <person name="Berche P."/>
            <person name="Bloecker H."/>
            <person name="Brandt P."/>
            <person name="Chakraborty T."/>
            <person name="Charbit A."/>
            <person name="Chetouani F."/>
            <person name="Couve E."/>
            <person name="de Daruvar A."/>
            <person name="Dehoux P."/>
            <person name="Domann E."/>
            <person name="Dominguez-Bernal G."/>
            <person name="Duchaud E."/>
            <person name="Durant L."/>
            <person name="Dussurget O."/>
            <person name="Entian K.-D."/>
            <person name="Fsihi H."/>
            <person name="Garcia-del Portillo F."/>
            <person name="Garrido P."/>
            <person name="Gautier L."/>
            <person name="Goebel W."/>
            <person name="Gomez-Lopez N."/>
            <person name="Hain T."/>
            <person name="Hauf J."/>
            <person name="Jackson D."/>
            <person name="Jones L.-M."/>
            <person name="Kaerst U."/>
            <person name="Kreft J."/>
            <person name="Kuhn M."/>
            <person name="Kunst F."/>
            <person name="Kurapkat G."/>
            <person name="Madueno E."/>
            <person name="Maitournam A."/>
            <person name="Mata Vicente J."/>
            <person name="Ng E."/>
            <person name="Nedjari H."/>
            <person name="Nordsiek G."/>
            <person name="Novella S."/>
            <person name="de Pablos B."/>
            <person name="Perez-Diaz J.-C."/>
            <person name="Purcell R."/>
            <person name="Remmel B."/>
            <person name="Rose M."/>
            <person name="Schlueter T."/>
            <person name="Simoes N."/>
            <person name="Tierrez A."/>
            <person name="Vazquez-Boland J.-A."/>
            <person name="Voss H."/>
            <person name="Wehland J."/>
            <person name="Cossart P."/>
        </authorList>
    </citation>
    <scope>NUCLEOTIDE SEQUENCE [LARGE SCALE GENOMIC DNA]</scope>
    <source>
        <strain>ATCC BAA-680 / CLIP 11262</strain>
    </source>
</reference>
<sequence length="363" mass="39623">MERVYNFSAGPAVLPVPVLEKVQRELLSYNGSGMSVMELSHRSELFQNIIDDAESLIRELMGIPENYKVLFLQGGASLQFDMVPMNLANGKKAVYVNTGSWAKKAISEAKKIQGVEVEVIASSEDRNFSYIPEIPTVSTDAAYLHVTTNNTIEGTAMFDVPDSAVPVVADMSSNILSSVYDVKKFGLIYAGAQKNIGPAGLTLVIVREDLIGQVEGLPSMLDFKVQAENGSMYNTPPTFAVYVAKLVFEWIKEQGGVAGIEALNRKKAALLYDYIEQSDFFSSPVEPSARSLTNIPFVTNSAEFDKAFVKEAEANGFKNLKGHRSVGGMRASLYNAFPIEGVEALIAFMEKFANARKGGEVRV</sequence>
<comment type="function">
    <text evidence="1">Catalyzes the reversible conversion of 3-phosphohydroxypyruvate to phosphoserine and of 3-hydroxy-2-oxo-4-phosphonooxybutanoate to phosphohydroxythreonine.</text>
</comment>
<comment type="catalytic activity">
    <reaction evidence="1">
        <text>O-phospho-L-serine + 2-oxoglutarate = 3-phosphooxypyruvate + L-glutamate</text>
        <dbReference type="Rhea" id="RHEA:14329"/>
        <dbReference type="ChEBI" id="CHEBI:16810"/>
        <dbReference type="ChEBI" id="CHEBI:18110"/>
        <dbReference type="ChEBI" id="CHEBI:29985"/>
        <dbReference type="ChEBI" id="CHEBI:57524"/>
        <dbReference type="EC" id="2.6.1.52"/>
    </reaction>
</comment>
<comment type="catalytic activity">
    <reaction evidence="1">
        <text>4-(phosphooxy)-L-threonine + 2-oxoglutarate = (R)-3-hydroxy-2-oxo-4-phosphooxybutanoate + L-glutamate</text>
        <dbReference type="Rhea" id="RHEA:16573"/>
        <dbReference type="ChEBI" id="CHEBI:16810"/>
        <dbReference type="ChEBI" id="CHEBI:29985"/>
        <dbReference type="ChEBI" id="CHEBI:58452"/>
        <dbReference type="ChEBI" id="CHEBI:58538"/>
        <dbReference type="EC" id="2.6.1.52"/>
    </reaction>
</comment>
<comment type="cofactor">
    <cofactor evidence="1">
        <name>pyridoxal 5'-phosphate</name>
        <dbReference type="ChEBI" id="CHEBI:597326"/>
    </cofactor>
    <text evidence="1">Binds 1 pyridoxal phosphate per subunit.</text>
</comment>
<comment type="pathway">
    <text evidence="1">Amino-acid biosynthesis; L-serine biosynthesis; L-serine from 3-phospho-D-glycerate: step 2/3.</text>
</comment>
<comment type="subunit">
    <text evidence="1">Homodimer.</text>
</comment>
<comment type="subcellular location">
    <subcellularLocation>
        <location evidence="1">Cytoplasm</location>
    </subcellularLocation>
</comment>
<comment type="similarity">
    <text evidence="1">Belongs to the class-V pyridoxal-phosphate-dependent aminotransferase family. SerC subfamily.</text>
</comment>
<protein>
    <recommendedName>
        <fullName evidence="1">Phosphoserine aminotransferase</fullName>
        <ecNumber evidence="1">2.6.1.52</ecNumber>
    </recommendedName>
    <alternativeName>
        <fullName evidence="1">Phosphohydroxythreonine aminotransferase</fullName>
        <shortName evidence="1">PSAT</shortName>
    </alternativeName>
</protein>
<name>SERC_LISIN</name>
<evidence type="ECO:0000255" key="1">
    <source>
        <dbReference type="HAMAP-Rule" id="MF_00160"/>
    </source>
</evidence>
<gene>
    <name evidence="1" type="primary">serC</name>
    <name type="ordered locus">lin2957</name>
</gene>
<organism>
    <name type="scientific">Listeria innocua serovar 6a (strain ATCC BAA-680 / CLIP 11262)</name>
    <dbReference type="NCBI Taxonomy" id="272626"/>
    <lineage>
        <taxon>Bacteria</taxon>
        <taxon>Bacillati</taxon>
        <taxon>Bacillota</taxon>
        <taxon>Bacilli</taxon>
        <taxon>Bacillales</taxon>
        <taxon>Listeriaceae</taxon>
        <taxon>Listeria</taxon>
    </lineage>
</organism>
<keyword id="KW-0028">Amino-acid biosynthesis</keyword>
<keyword id="KW-0032">Aminotransferase</keyword>
<keyword id="KW-0963">Cytoplasm</keyword>
<keyword id="KW-0663">Pyridoxal phosphate</keyword>
<keyword id="KW-0664">Pyridoxine biosynthesis</keyword>
<keyword id="KW-0718">Serine biosynthesis</keyword>
<keyword id="KW-0808">Transferase</keyword>
<accession>Q926T3</accession>
<proteinExistence type="inferred from homology"/>
<feature type="chain" id="PRO_0000150183" description="Phosphoserine aminotransferase">
    <location>
        <begin position="1"/>
        <end position="363"/>
    </location>
</feature>
<feature type="binding site" evidence="1">
    <location>
        <position position="42"/>
    </location>
    <ligand>
        <name>L-glutamate</name>
        <dbReference type="ChEBI" id="CHEBI:29985"/>
    </ligand>
</feature>
<feature type="binding site" evidence="1">
    <location>
        <begin position="76"/>
        <end position="77"/>
    </location>
    <ligand>
        <name>pyridoxal 5'-phosphate</name>
        <dbReference type="ChEBI" id="CHEBI:597326"/>
    </ligand>
</feature>
<feature type="binding site" evidence="1">
    <location>
        <position position="101"/>
    </location>
    <ligand>
        <name>pyridoxal 5'-phosphate</name>
        <dbReference type="ChEBI" id="CHEBI:597326"/>
    </ligand>
</feature>
<feature type="binding site" evidence="1">
    <location>
        <position position="151"/>
    </location>
    <ligand>
        <name>pyridoxal 5'-phosphate</name>
        <dbReference type="ChEBI" id="CHEBI:597326"/>
    </ligand>
</feature>
<feature type="binding site" evidence="1">
    <location>
        <position position="170"/>
    </location>
    <ligand>
        <name>pyridoxal 5'-phosphate</name>
        <dbReference type="ChEBI" id="CHEBI:597326"/>
    </ligand>
</feature>
<feature type="binding site" evidence="1">
    <location>
        <position position="193"/>
    </location>
    <ligand>
        <name>pyridoxal 5'-phosphate</name>
        <dbReference type="ChEBI" id="CHEBI:597326"/>
    </ligand>
</feature>
<feature type="binding site" evidence="1">
    <location>
        <begin position="234"/>
        <end position="235"/>
    </location>
    <ligand>
        <name>pyridoxal 5'-phosphate</name>
        <dbReference type="ChEBI" id="CHEBI:597326"/>
    </ligand>
</feature>
<feature type="modified residue" description="N6-(pyridoxal phosphate)lysine" evidence="1">
    <location>
        <position position="194"/>
    </location>
</feature>
<dbReference type="EC" id="2.6.1.52" evidence="1"/>
<dbReference type="EMBL" id="AL596174">
    <property type="protein sequence ID" value="CAC98182.1"/>
    <property type="molecule type" value="Genomic_DNA"/>
</dbReference>
<dbReference type="PIR" id="AF1801">
    <property type="entry name" value="AF1801"/>
</dbReference>
<dbReference type="RefSeq" id="WP_010991477.1">
    <property type="nucleotide sequence ID" value="NC_003212.1"/>
</dbReference>
<dbReference type="SMR" id="Q926T3"/>
<dbReference type="STRING" id="272626.gene:17567343"/>
<dbReference type="KEGG" id="lin:serC"/>
<dbReference type="eggNOG" id="COG1932">
    <property type="taxonomic scope" value="Bacteria"/>
</dbReference>
<dbReference type="HOGENOM" id="CLU_034866_0_2_9"/>
<dbReference type="OrthoDB" id="9809412at2"/>
<dbReference type="UniPathway" id="UPA00135">
    <property type="reaction ID" value="UER00197"/>
</dbReference>
<dbReference type="Proteomes" id="UP000002513">
    <property type="component" value="Chromosome"/>
</dbReference>
<dbReference type="GO" id="GO:0005737">
    <property type="term" value="C:cytoplasm"/>
    <property type="evidence" value="ECO:0007669"/>
    <property type="project" value="UniProtKB-SubCell"/>
</dbReference>
<dbReference type="GO" id="GO:0004648">
    <property type="term" value="F:O-phospho-L-serine:2-oxoglutarate aminotransferase activity"/>
    <property type="evidence" value="ECO:0007669"/>
    <property type="project" value="UniProtKB-UniRule"/>
</dbReference>
<dbReference type="GO" id="GO:0030170">
    <property type="term" value="F:pyridoxal phosphate binding"/>
    <property type="evidence" value="ECO:0007669"/>
    <property type="project" value="UniProtKB-UniRule"/>
</dbReference>
<dbReference type="GO" id="GO:0006564">
    <property type="term" value="P:L-serine biosynthetic process"/>
    <property type="evidence" value="ECO:0007669"/>
    <property type="project" value="UniProtKB-UniRule"/>
</dbReference>
<dbReference type="GO" id="GO:0008615">
    <property type="term" value="P:pyridoxine biosynthetic process"/>
    <property type="evidence" value="ECO:0007669"/>
    <property type="project" value="UniProtKB-KW"/>
</dbReference>
<dbReference type="FunFam" id="3.40.640.10:FF:000010">
    <property type="entry name" value="Phosphoserine aminotransferase"/>
    <property type="match status" value="1"/>
</dbReference>
<dbReference type="FunFam" id="3.90.1150.10:FF:000006">
    <property type="entry name" value="Phosphoserine aminotransferase"/>
    <property type="match status" value="1"/>
</dbReference>
<dbReference type="Gene3D" id="3.90.1150.10">
    <property type="entry name" value="Aspartate Aminotransferase, domain 1"/>
    <property type="match status" value="1"/>
</dbReference>
<dbReference type="Gene3D" id="3.40.640.10">
    <property type="entry name" value="Type I PLP-dependent aspartate aminotransferase-like (Major domain)"/>
    <property type="match status" value="1"/>
</dbReference>
<dbReference type="HAMAP" id="MF_00160">
    <property type="entry name" value="SerC_aminotrans_5"/>
    <property type="match status" value="1"/>
</dbReference>
<dbReference type="InterPro" id="IPR000192">
    <property type="entry name" value="Aminotrans_V_dom"/>
</dbReference>
<dbReference type="InterPro" id="IPR020578">
    <property type="entry name" value="Aminotrans_V_PyrdxlP_BS"/>
</dbReference>
<dbReference type="InterPro" id="IPR022278">
    <property type="entry name" value="Pser_aminoTfrase"/>
</dbReference>
<dbReference type="InterPro" id="IPR015424">
    <property type="entry name" value="PyrdxlP-dep_Trfase"/>
</dbReference>
<dbReference type="InterPro" id="IPR015421">
    <property type="entry name" value="PyrdxlP-dep_Trfase_major"/>
</dbReference>
<dbReference type="InterPro" id="IPR015422">
    <property type="entry name" value="PyrdxlP-dep_Trfase_small"/>
</dbReference>
<dbReference type="NCBIfam" id="NF003764">
    <property type="entry name" value="PRK05355.1"/>
    <property type="match status" value="1"/>
</dbReference>
<dbReference type="NCBIfam" id="TIGR01364">
    <property type="entry name" value="serC_1"/>
    <property type="match status" value="1"/>
</dbReference>
<dbReference type="PANTHER" id="PTHR43247">
    <property type="entry name" value="PHOSPHOSERINE AMINOTRANSFERASE"/>
    <property type="match status" value="1"/>
</dbReference>
<dbReference type="PANTHER" id="PTHR43247:SF1">
    <property type="entry name" value="PHOSPHOSERINE AMINOTRANSFERASE"/>
    <property type="match status" value="1"/>
</dbReference>
<dbReference type="Pfam" id="PF00266">
    <property type="entry name" value="Aminotran_5"/>
    <property type="match status" value="1"/>
</dbReference>
<dbReference type="PIRSF" id="PIRSF000525">
    <property type="entry name" value="SerC"/>
    <property type="match status" value="1"/>
</dbReference>
<dbReference type="SUPFAM" id="SSF53383">
    <property type="entry name" value="PLP-dependent transferases"/>
    <property type="match status" value="1"/>
</dbReference>
<dbReference type="PROSITE" id="PS00595">
    <property type="entry name" value="AA_TRANSFER_CLASS_5"/>
    <property type="match status" value="1"/>
</dbReference>